<organism>
    <name type="scientific">Shewanella sp. (strain MR-7)</name>
    <dbReference type="NCBI Taxonomy" id="60481"/>
    <lineage>
        <taxon>Bacteria</taxon>
        <taxon>Pseudomonadati</taxon>
        <taxon>Pseudomonadota</taxon>
        <taxon>Gammaproteobacteria</taxon>
        <taxon>Alteromonadales</taxon>
        <taxon>Shewanellaceae</taxon>
        <taxon>Shewanella</taxon>
    </lineage>
</organism>
<dbReference type="EC" id="2.8.1.4" evidence="1"/>
<dbReference type="EMBL" id="CP000444">
    <property type="protein sequence ID" value="ABI43784.1"/>
    <property type="molecule type" value="Genomic_DNA"/>
</dbReference>
<dbReference type="SMR" id="Q0HSX1"/>
<dbReference type="KEGG" id="shm:Shewmr7_2799"/>
<dbReference type="HOGENOM" id="CLU_037952_4_1_6"/>
<dbReference type="UniPathway" id="UPA00060"/>
<dbReference type="GO" id="GO:0005829">
    <property type="term" value="C:cytosol"/>
    <property type="evidence" value="ECO:0007669"/>
    <property type="project" value="TreeGrafter"/>
</dbReference>
<dbReference type="GO" id="GO:0005524">
    <property type="term" value="F:ATP binding"/>
    <property type="evidence" value="ECO:0007669"/>
    <property type="project" value="UniProtKB-UniRule"/>
</dbReference>
<dbReference type="GO" id="GO:0004810">
    <property type="term" value="F:CCA tRNA nucleotidyltransferase activity"/>
    <property type="evidence" value="ECO:0007669"/>
    <property type="project" value="InterPro"/>
</dbReference>
<dbReference type="GO" id="GO:0000049">
    <property type="term" value="F:tRNA binding"/>
    <property type="evidence" value="ECO:0007669"/>
    <property type="project" value="UniProtKB-UniRule"/>
</dbReference>
<dbReference type="GO" id="GO:0140741">
    <property type="term" value="F:tRNA-uracil-4 sulfurtransferase activity"/>
    <property type="evidence" value="ECO:0007669"/>
    <property type="project" value="UniProtKB-EC"/>
</dbReference>
<dbReference type="GO" id="GO:0009228">
    <property type="term" value="P:thiamine biosynthetic process"/>
    <property type="evidence" value="ECO:0007669"/>
    <property type="project" value="UniProtKB-KW"/>
</dbReference>
<dbReference type="GO" id="GO:0009229">
    <property type="term" value="P:thiamine diphosphate biosynthetic process"/>
    <property type="evidence" value="ECO:0007669"/>
    <property type="project" value="UniProtKB-UniRule"/>
</dbReference>
<dbReference type="GO" id="GO:0052837">
    <property type="term" value="P:thiazole biosynthetic process"/>
    <property type="evidence" value="ECO:0007669"/>
    <property type="project" value="InterPro"/>
</dbReference>
<dbReference type="GO" id="GO:0002937">
    <property type="term" value="P:tRNA 4-thiouridine biosynthesis"/>
    <property type="evidence" value="ECO:0007669"/>
    <property type="project" value="TreeGrafter"/>
</dbReference>
<dbReference type="CDD" id="cd01712">
    <property type="entry name" value="PPase_ThiI"/>
    <property type="match status" value="1"/>
</dbReference>
<dbReference type="CDD" id="cd00158">
    <property type="entry name" value="RHOD"/>
    <property type="match status" value="1"/>
</dbReference>
<dbReference type="CDD" id="cd11716">
    <property type="entry name" value="THUMP_ThiI"/>
    <property type="match status" value="1"/>
</dbReference>
<dbReference type="FunFam" id="3.30.2130.30:FF:000002">
    <property type="entry name" value="tRNA sulfurtransferase"/>
    <property type="match status" value="1"/>
</dbReference>
<dbReference type="FunFam" id="3.40.250.10:FF:000003">
    <property type="entry name" value="tRNA sulfurtransferase"/>
    <property type="match status" value="1"/>
</dbReference>
<dbReference type="FunFam" id="3.40.50.620:FF:000029">
    <property type="entry name" value="tRNA sulfurtransferase"/>
    <property type="match status" value="1"/>
</dbReference>
<dbReference type="Gene3D" id="3.30.2130.30">
    <property type="match status" value="1"/>
</dbReference>
<dbReference type="Gene3D" id="3.40.50.620">
    <property type="entry name" value="HUPs"/>
    <property type="match status" value="1"/>
</dbReference>
<dbReference type="Gene3D" id="3.40.250.10">
    <property type="entry name" value="Rhodanese-like domain"/>
    <property type="match status" value="1"/>
</dbReference>
<dbReference type="HAMAP" id="MF_00021">
    <property type="entry name" value="ThiI"/>
    <property type="match status" value="1"/>
</dbReference>
<dbReference type="InterPro" id="IPR001763">
    <property type="entry name" value="Rhodanese-like_dom"/>
</dbReference>
<dbReference type="InterPro" id="IPR036873">
    <property type="entry name" value="Rhodanese-like_dom_sf"/>
</dbReference>
<dbReference type="InterPro" id="IPR014729">
    <property type="entry name" value="Rossmann-like_a/b/a_fold"/>
</dbReference>
<dbReference type="InterPro" id="IPR020536">
    <property type="entry name" value="ThiI_AANH"/>
</dbReference>
<dbReference type="InterPro" id="IPR054173">
    <property type="entry name" value="ThiI_fer"/>
</dbReference>
<dbReference type="InterPro" id="IPR049961">
    <property type="entry name" value="ThiI_N"/>
</dbReference>
<dbReference type="InterPro" id="IPR026340">
    <property type="entry name" value="THII_Thiazole_biosynth_dom"/>
</dbReference>
<dbReference type="InterPro" id="IPR004114">
    <property type="entry name" value="THUMP_dom"/>
</dbReference>
<dbReference type="InterPro" id="IPR049962">
    <property type="entry name" value="THUMP_ThiI"/>
</dbReference>
<dbReference type="InterPro" id="IPR003720">
    <property type="entry name" value="tRNA_STrfase"/>
</dbReference>
<dbReference type="InterPro" id="IPR050102">
    <property type="entry name" value="tRNA_sulfurtransferase_ThiI"/>
</dbReference>
<dbReference type="NCBIfam" id="TIGR04271">
    <property type="entry name" value="ThiI_C_thiazole"/>
    <property type="match status" value="1"/>
</dbReference>
<dbReference type="NCBIfam" id="TIGR00342">
    <property type="entry name" value="tRNA uracil 4-sulfurtransferase ThiI"/>
    <property type="match status" value="1"/>
</dbReference>
<dbReference type="PANTHER" id="PTHR43209">
    <property type="entry name" value="TRNA SULFURTRANSFERASE"/>
    <property type="match status" value="1"/>
</dbReference>
<dbReference type="PANTHER" id="PTHR43209:SF1">
    <property type="entry name" value="TRNA SULFURTRANSFERASE"/>
    <property type="match status" value="1"/>
</dbReference>
<dbReference type="Pfam" id="PF00581">
    <property type="entry name" value="Rhodanese"/>
    <property type="match status" value="1"/>
</dbReference>
<dbReference type="Pfam" id="PF02568">
    <property type="entry name" value="ThiI"/>
    <property type="match status" value="1"/>
</dbReference>
<dbReference type="Pfam" id="PF22025">
    <property type="entry name" value="ThiI_fer"/>
    <property type="match status" value="1"/>
</dbReference>
<dbReference type="Pfam" id="PF02926">
    <property type="entry name" value="THUMP"/>
    <property type="match status" value="1"/>
</dbReference>
<dbReference type="SMART" id="SM00981">
    <property type="entry name" value="THUMP"/>
    <property type="match status" value="1"/>
</dbReference>
<dbReference type="SUPFAM" id="SSF52402">
    <property type="entry name" value="Adenine nucleotide alpha hydrolases-like"/>
    <property type="match status" value="1"/>
</dbReference>
<dbReference type="SUPFAM" id="SSF52821">
    <property type="entry name" value="Rhodanese/Cell cycle control phosphatase"/>
    <property type="match status" value="1"/>
</dbReference>
<dbReference type="SUPFAM" id="SSF143437">
    <property type="entry name" value="THUMP domain-like"/>
    <property type="match status" value="1"/>
</dbReference>
<dbReference type="PROSITE" id="PS50206">
    <property type="entry name" value="RHODANESE_3"/>
    <property type="match status" value="1"/>
</dbReference>
<dbReference type="PROSITE" id="PS51165">
    <property type="entry name" value="THUMP"/>
    <property type="match status" value="1"/>
</dbReference>
<gene>
    <name evidence="1" type="primary">thiI</name>
    <name type="ordered locus">Shewmr7_2799</name>
</gene>
<accession>Q0HSX1</accession>
<sequence length="484" mass="55011">MKFIVKLYPEIMMKSKPVRMRFTKMLETNIRNVLKKVDEDAKVQRQWDRIWVKVPNDKPELAQAFGERLACIPGIAHVVQVDEYSFTSVDDIYQQVLPVYRDQIAGKTFCVRVKRTGSHDFNSIEVERYVGGGLNQFTDAVGVRLKNPEVTVNLEIEGDKLYMVTKRIEGLGGFPMATQEDVLSLISGGFDSGVSSYQFIKKGARTHYCFFNLGGAQHEIGVKQVAYHLWKTYGESHKVKFVSVPFEPVVAEILEKIDNGQMGVVLKRMMMRTAARIAERMGIQAIVTGESLGQVSSQTLTNLNVIDRCTDMLILRPLIAMDKQDIINECRRIGTEDFAKSMPEYCGVISQKPTVKAVLAKVEAEETKFSEDLIDRIVEQAVAIDIREIAEQMNTRITETETVVAIDTNEVVIDIRAPEEEENKPLEIEGVEIKRIPFFKLATQFADLDKQKTYLLYCERGVMSKLQALYLIEQGYHNVKVYRP</sequence>
<protein>
    <recommendedName>
        <fullName evidence="1">tRNA sulfurtransferase</fullName>
        <ecNumber evidence="1">2.8.1.4</ecNumber>
    </recommendedName>
    <alternativeName>
        <fullName evidence="1">Sulfur carrier protein ThiS sulfurtransferase</fullName>
    </alternativeName>
    <alternativeName>
        <fullName evidence="1">Thiamine biosynthesis protein ThiI</fullName>
    </alternativeName>
    <alternativeName>
        <fullName evidence="1">tRNA 4-thiouridine synthase</fullName>
    </alternativeName>
</protein>
<feature type="chain" id="PRO_1000074275" description="tRNA sulfurtransferase">
    <location>
        <begin position="1"/>
        <end position="484"/>
    </location>
</feature>
<feature type="domain" description="THUMP" evidence="1">
    <location>
        <begin position="63"/>
        <end position="167"/>
    </location>
</feature>
<feature type="domain" description="Rhodanese" evidence="1">
    <location>
        <begin position="406"/>
        <end position="484"/>
    </location>
</feature>
<feature type="active site" description="Cysteine persulfide intermediate" evidence="1">
    <location>
        <position position="458"/>
    </location>
</feature>
<feature type="binding site" evidence="1">
    <location>
        <begin position="185"/>
        <end position="186"/>
    </location>
    <ligand>
        <name>ATP</name>
        <dbReference type="ChEBI" id="CHEBI:30616"/>
    </ligand>
</feature>
<feature type="binding site" evidence="1">
    <location>
        <position position="267"/>
    </location>
    <ligand>
        <name>ATP</name>
        <dbReference type="ChEBI" id="CHEBI:30616"/>
    </ligand>
</feature>
<feature type="binding site" evidence="1">
    <location>
        <position position="289"/>
    </location>
    <ligand>
        <name>ATP</name>
        <dbReference type="ChEBI" id="CHEBI:30616"/>
    </ligand>
</feature>
<feature type="binding site" evidence="1">
    <location>
        <position position="298"/>
    </location>
    <ligand>
        <name>ATP</name>
        <dbReference type="ChEBI" id="CHEBI:30616"/>
    </ligand>
</feature>
<feature type="disulfide bond" description="Redox-active" evidence="1">
    <location>
        <begin position="346"/>
        <end position="458"/>
    </location>
</feature>
<name>THII_SHESR</name>
<proteinExistence type="inferred from homology"/>
<evidence type="ECO:0000255" key="1">
    <source>
        <dbReference type="HAMAP-Rule" id="MF_00021"/>
    </source>
</evidence>
<comment type="function">
    <text evidence="1">Catalyzes the ATP-dependent transfer of a sulfur to tRNA to produce 4-thiouridine in position 8 of tRNAs, which functions as a near-UV photosensor. Also catalyzes the transfer of sulfur to the sulfur carrier protein ThiS, forming ThiS-thiocarboxylate. This is a step in the synthesis of thiazole, in the thiamine biosynthesis pathway. The sulfur is donated as persulfide by IscS.</text>
</comment>
<comment type="catalytic activity">
    <reaction evidence="1">
        <text>[ThiI sulfur-carrier protein]-S-sulfanyl-L-cysteine + a uridine in tRNA + 2 reduced [2Fe-2S]-[ferredoxin] + ATP + H(+) = [ThiI sulfur-carrier protein]-L-cysteine + a 4-thiouridine in tRNA + 2 oxidized [2Fe-2S]-[ferredoxin] + AMP + diphosphate</text>
        <dbReference type="Rhea" id="RHEA:24176"/>
        <dbReference type="Rhea" id="RHEA-COMP:10000"/>
        <dbReference type="Rhea" id="RHEA-COMP:10001"/>
        <dbReference type="Rhea" id="RHEA-COMP:13337"/>
        <dbReference type="Rhea" id="RHEA-COMP:13338"/>
        <dbReference type="Rhea" id="RHEA-COMP:13339"/>
        <dbReference type="Rhea" id="RHEA-COMP:13340"/>
        <dbReference type="ChEBI" id="CHEBI:15378"/>
        <dbReference type="ChEBI" id="CHEBI:29950"/>
        <dbReference type="ChEBI" id="CHEBI:30616"/>
        <dbReference type="ChEBI" id="CHEBI:33019"/>
        <dbReference type="ChEBI" id="CHEBI:33737"/>
        <dbReference type="ChEBI" id="CHEBI:33738"/>
        <dbReference type="ChEBI" id="CHEBI:61963"/>
        <dbReference type="ChEBI" id="CHEBI:65315"/>
        <dbReference type="ChEBI" id="CHEBI:136798"/>
        <dbReference type="ChEBI" id="CHEBI:456215"/>
        <dbReference type="EC" id="2.8.1.4"/>
    </reaction>
</comment>
<comment type="catalytic activity">
    <reaction evidence="1">
        <text>[ThiS sulfur-carrier protein]-C-terminal Gly-Gly-AMP + S-sulfanyl-L-cysteinyl-[cysteine desulfurase] + AH2 = [ThiS sulfur-carrier protein]-C-terminal-Gly-aminoethanethioate + L-cysteinyl-[cysteine desulfurase] + A + AMP + 2 H(+)</text>
        <dbReference type="Rhea" id="RHEA:43340"/>
        <dbReference type="Rhea" id="RHEA-COMP:12157"/>
        <dbReference type="Rhea" id="RHEA-COMP:12158"/>
        <dbReference type="Rhea" id="RHEA-COMP:12910"/>
        <dbReference type="Rhea" id="RHEA-COMP:19908"/>
        <dbReference type="ChEBI" id="CHEBI:13193"/>
        <dbReference type="ChEBI" id="CHEBI:15378"/>
        <dbReference type="ChEBI" id="CHEBI:17499"/>
        <dbReference type="ChEBI" id="CHEBI:29950"/>
        <dbReference type="ChEBI" id="CHEBI:61963"/>
        <dbReference type="ChEBI" id="CHEBI:90618"/>
        <dbReference type="ChEBI" id="CHEBI:232372"/>
        <dbReference type="ChEBI" id="CHEBI:456215"/>
    </reaction>
</comment>
<comment type="pathway">
    <text evidence="1">Cofactor biosynthesis; thiamine diphosphate biosynthesis.</text>
</comment>
<comment type="subcellular location">
    <subcellularLocation>
        <location evidence="1">Cytoplasm</location>
    </subcellularLocation>
</comment>
<comment type="similarity">
    <text evidence="1">Belongs to the ThiI family.</text>
</comment>
<reference key="1">
    <citation type="submission" date="2006-08" db="EMBL/GenBank/DDBJ databases">
        <title>Complete sequence of chromosome 1 of Shewanella sp. MR-7.</title>
        <authorList>
            <person name="Copeland A."/>
            <person name="Lucas S."/>
            <person name="Lapidus A."/>
            <person name="Barry K."/>
            <person name="Detter J.C."/>
            <person name="Glavina del Rio T."/>
            <person name="Hammon N."/>
            <person name="Israni S."/>
            <person name="Dalin E."/>
            <person name="Tice H."/>
            <person name="Pitluck S."/>
            <person name="Kiss H."/>
            <person name="Brettin T."/>
            <person name="Bruce D."/>
            <person name="Han C."/>
            <person name="Tapia R."/>
            <person name="Gilna P."/>
            <person name="Schmutz J."/>
            <person name="Larimer F."/>
            <person name="Land M."/>
            <person name="Hauser L."/>
            <person name="Kyrpides N."/>
            <person name="Mikhailova N."/>
            <person name="Nealson K."/>
            <person name="Konstantinidis K."/>
            <person name="Klappenbach J."/>
            <person name="Tiedje J."/>
            <person name="Richardson P."/>
        </authorList>
    </citation>
    <scope>NUCLEOTIDE SEQUENCE [LARGE SCALE GENOMIC DNA]</scope>
    <source>
        <strain>MR-7</strain>
    </source>
</reference>
<keyword id="KW-0067">ATP-binding</keyword>
<keyword id="KW-0963">Cytoplasm</keyword>
<keyword id="KW-1015">Disulfide bond</keyword>
<keyword id="KW-0547">Nucleotide-binding</keyword>
<keyword id="KW-0676">Redox-active center</keyword>
<keyword id="KW-0694">RNA-binding</keyword>
<keyword id="KW-0784">Thiamine biosynthesis</keyword>
<keyword id="KW-0808">Transferase</keyword>
<keyword id="KW-0820">tRNA-binding</keyword>